<keyword id="KW-0963">Cytoplasm</keyword>
<keyword id="KW-0489">Methyltransferase</keyword>
<keyword id="KW-1185">Reference proteome</keyword>
<keyword id="KW-0690">Ribosome biogenesis</keyword>
<keyword id="KW-0694">RNA-binding</keyword>
<keyword id="KW-0698">rRNA processing</keyword>
<keyword id="KW-0949">S-adenosyl-L-methionine</keyword>
<keyword id="KW-0808">Transferase</keyword>
<dbReference type="EC" id="2.1.1.176"/>
<dbReference type="EMBL" id="AE008922">
    <property type="protein sequence ID" value="AAM43004.1"/>
    <property type="molecule type" value="Genomic_DNA"/>
</dbReference>
<dbReference type="RefSeq" id="NP_639092.1">
    <property type="nucleotide sequence ID" value="NC_003902.1"/>
</dbReference>
<dbReference type="SMR" id="Q8P4G1"/>
<dbReference type="STRING" id="190485.XCC3747"/>
<dbReference type="EnsemblBacteria" id="AAM43004">
    <property type="protein sequence ID" value="AAM43004"/>
    <property type="gene ID" value="XCC3747"/>
</dbReference>
<dbReference type="KEGG" id="xcc:XCC3747"/>
<dbReference type="PATRIC" id="fig|190485.4.peg.4008"/>
<dbReference type="eggNOG" id="COG0144">
    <property type="taxonomic scope" value="Bacteria"/>
</dbReference>
<dbReference type="eggNOG" id="COG0781">
    <property type="taxonomic scope" value="Bacteria"/>
</dbReference>
<dbReference type="HOGENOM" id="CLU_005316_0_4_6"/>
<dbReference type="OrthoDB" id="9810297at2"/>
<dbReference type="Proteomes" id="UP000001010">
    <property type="component" value="Chromosome"/>
</dbReference>
<dbReference type="GO" id="GO:0005829">
    <property type="term" value="C:cytosol"/>
    <property type="evidence" value="ECO:0000318"/>
    <property type="project" value="GO_Central"/>
</dbReference>
<dbReference type="GO" id="GO:0003723">
    <property type="term" value="F:RNA binding"/>
    <property type="evidence" value="ECO:0007669"/>
    <property type="project" value="UniProtKB-KW"/>
</dbReference>
<dbReference type="GO" id="GO:0009383">
    <property type="term" value="F:rRNA (cytosine-C5-)-methyltransferase activity"/>
    <property type="evidence" value="ECO:0000318"/>
    <property type="project" value="GO_Central"/>
</dbReference>
<dbReference type="GO" id="GO:0006355">
    <property type="term" value="P:regulation of DNA-templated transcription"/>
    <property type="evidence" value="ECO:0007669"/>
    <property type="project" value="InterPro"/>
</dbReference>
<dbReference type="GO" id="GO:0070475">
    <property type="term" value="P:rRNA base methylation"/>
    <property type="evidence" value="ECO:0000318"/>
    <property type="project" value="GO_Central"/>
</dbReference>
<dbReference type="CDD" id="cd02440">
    <property type="entry name" value="AdoMet_MTases"/>
    <property type="match status" value="1"/>
</dbReference>
<dbReference type="FunFam" id="3.30.70.1170:FF:000002">
    <property type="entry name" value="Ribosomal RNA small subunit methyltransferase B"/>
    <property type="match status" value="1"/>
</dbReference>
<dbReference type="FunFam" id="3.40.50.150:FF:000022">
    <property type="entry name" value="Ribosomal RNA small subunit methyltransferase B"/>
    <property type="match status" value="1"/>
</dbReference>
<dbReference type="Gene3D" id="1.10.940.10">
    <property type="entry name" value="NusB-like"/>
    <property type="match status" value="1"/>
</dbReference>
<dbReference type="Gene3D" id="3.30.70.1170">
    <property type="entry name" value="Sun protein, domain 3"/>
    <property type="match status" value="1"/>
</dbReference>
<dbReference type="Gene3D" id="3.40.50.150">
    <property type="entry name" value="Vaccinia Virus protein VP39"/>
    <property type="match status" value="1"/>
</dbReference>
<dbReference type="InterPro" id="IPR049560">
    <property type="entry name" value="MeTrfase_RsmB-F_NOP2_cat"/>
</dbReference>
<dbReference type="InterPro" id="IPR001678">
    <property type="entry name" value="MeTrfase_RsmB-F_NOP2_dom"/>
</dbReference>
<dbReference type="InterPro" id="IPR035926">
    <property type="entry name" value="NusB-like_sf"/>
</dbReference>
<dbReference type="InterPro" id="IPR006027">
    <property type="entry name" value="NusB_RsmB_TIM44"/>
</dbReference>
<dbReference type="InterPro" id="IPR023267">
    <property type="entry name" value="RCMT"/>
</dbReference>
<dbReference type="InterPro" id="IPR004573">
    <property type="entry name" value="rRNA_ssu_MeTfrase_B"/>
</dbReference>
<dbReference type="InterPro" id="IPR054728">
    <property type="entry name" value="RsmB-like_ferredoxin"/>
</dbReference>
<dbReference type="InterPro" id="IPR018314">
    <property type="entry name" value="RsmB/NOL1/NOP2-like_CS"/>
</dbReference>
<dbReference type="InterPro" id="IPR029063">
    <property type="entry name" value="SAM-dependent_MTases_sf"/>
</dbReference>
<dbReference type="NCBIfam" id="NF008149">
    <property type="entry name" value="PRK10901.1"/>
    <property type="match status" value="1"/>
</dbReference>
<dbReference type="NCBIfam" id="TIGR00563">
    <property type="entry name" value="rsmB"/>
    <property type="match status" value="1"/>
</dbReference>
<dbReference type="PANTHER" id="PTHR22807:SF61">
    <property type="entry name" value="NOL1_NOP2_SUN FAMILY PROTEIN _ ANTITERMINATION NUSB DOMAIN-CONTAINING PROTEIN"/>
    <property type="match status" value="1"/>
</dbReference>
<dbReference type="PANTHER" id="PTHR22807">
    <property type="entry name" value="NOP2 YEAST -RELATED NOL1/NOP2/FMU SUN DOMAIN-CONTAINING"/>
    <property type="match status" value="1"/>
</dbReference>
<dbReference type="Pfam" id="PF01189">
    <property type="entry name" value="Methyltr_RsmB-F"/>
    <property type="match status" value="1"/>
</dbReference>
<dbReference type="Pfam" id="PF01029">
    <property type="entry name" value="NusB"/>
    <property type="match status" value="1"/>
</dbReference>
<dbReference type="Pfam" id="PF22458">
    <property type="entry name" value="RsmF-B_ferredox"/>
    <property type="match status" value="1"/>
</dbReference>
<dbReference type="PRINTS" id="PR02008">
    <property type="entry name" value="RCMTFAMILY"/>
</dbReference>
<dbReference type="SUPFAM" id="SSF48013">
    <property type="entry name" value="NusB-like"/>
    <property type="match status" value="1"/>
</dbReference>
<dbReference type="SUPFAM" id="SSF53335">
    <property type="entry name" value="S-adenosyl-L-methionine-dependent methyltransferases"/>
    <property type="match status" value="1"/>
</dbReference>
<dbReference type="PROSITE" id="PS01153">
    <property type="entry name" value="NOL1_NOP2_SUN"/>
    <property type="match status" value="1"/>
</dbReference>
<dbReference type="PROSITE" id="PS51686">
    <property type="entry name" value="SAM_MT_RSMB_NOP"/>
    <property type="match status" value="1"/>
</dbReference>
<sequence>MMAAETAAAGVASRLAAARILAAVFDQGRSLKAELTAALPGVSDPRDRALVEAICFAVLRRRPAYDVALRQWLERPLPPRDAELKALLMAGFAQLDVLQLPAHAALSATVEACRALGRPRQAGMVNAVLRRAQREGFPAVADDAGWPSWLRKQLRADWGDQAEAIFVESARMAPMWLRVPRARVSPAEYVARLAEQGITAHTDPVLADAVRLDTAVPVSQLPGFAQGDVSVQDGSAQQVADALALAPAARVLDACAAPGGKAAHLLERHPQLQLTALDVDARRLERVRQTVQRTAPDRTVRLHPADAADTAAWWDGQPFDAVLLDAPCSATGVVRRQPDVLLHRRADDIDALCALQARLLEACWRTLRPGGQLLYTTCSLLKRENQTQIEAFLQRTADAQAQPLGAQFGHAAGAGRQRFPGEQQCDGFFYALLLKAS</sequence>
<organism>
    <name type="scientific">Xanthomonas campestris pv. campestris (strain ATCC 33913 / DSM 3586 / NCPPB 528 / LMG 568 / P 25)</name>
    <dbReference type="NCBI Taxonomy" id="190485"/>
    <lineage>
        <taxon>Bacteria</taxon>
        <taxon>Pseudomonadati</taxon>
        <taxon>Pseudomonadota</taxon>
        <taxon>Gammaproteobacteria</taxon>
        <taxon>Lysobacterales</taxon>
        <taxon>Lysobacteraceae</taxon>
        <taxon>Xanthomonas</taxon>
    </lineage>
</organism>
<reference key="1">
    <citation type="journal article" date="2002" name="Nature">
        <title>Comparison of the genomes of two Xanthomonas pathogens with differing host specificities.</title>
        <authorList>
            <person name="da Silva A.C.R."/>
            <person name="Ferro J.A."/>
            <person name="Reinach F.C."/>
            <person name="Farah C.S."/>
            <person name="Furlan L.R."/>
            <person name="Quaggio R.B."/>
            <person name="Monteiro-Vitorello C.B."/>
            <person name="Van Sluys M.A."/>
            <person name="Almeida N.F. Jr."/>
            <person name="Alves L.M.C."/>
            <person name="do Amaral A.M."/>
            <person name="Bertolini M.C."/>
            <person name="Camargo L.E.A."/>
            <person name="Camarotte G."/>
            <person name="Cannavan F."/>
            <person name="Cardozo J."/>
            <person name="Chambergo F."/>
            <person name="Ciapina L.P."/>
            <person name="Cicarelli R.M.B."/>
            <person name="Coutinho L.L."/>
            <person name="Cursino-Santos J.R."/>
            <person name="El-Dorry H."/>
            <person name="Faria J.B."/>
            <person name="Ferreira A.J.S."/>
            <person name="Ferreira R.C.C."/>
            <person name="Ferro M.I.T."/>
            <person name="Formighieri E.F."/>
            <person name="Franco M.C."/>
            <person name="Greggio C.C."/>
            <person name="Gruber A."/>
            <person name="Katsuyama A.M."/>
            <person name="Kishi L.T."/>
            <person name="Leite R.P."/>
            <person name="Lemos E.G.M."/>
            <person name="Lemos M.V.F."/>
            <person name="Locali E.C."/>
            <person name="Machado M.A."/>
            <person name="Madeira A.M.B.N."/>
            <person name="Martinez-Rossi N.M."/>
            <person name="Martins E.C."/>
            <person name="Meidanis J."/>
            <person name="Menck C.F.M."/>
            <person name="Miyaki C.Y."/>
            <person name="Moon D.H."/>
            <person name="Moreira L.M."/>
            <person name="Novo M.T.M."/>
            <person name="Okura V.K."/>
            <person name="Oliveira M.C."/>
            <person name="Oliveira V.R."/>
            <person name="Pereira H.A."/>
            <person name="Rossi A."/>
            <person name="Sena J.A.D."/>
            <person name="Silva C."/>
            <person name="de Souza R.F."/>
            <person name="Spinola L.A.F."/>
            <person name="Takita M.A."/>
            <person name="Tamura R.E."/>
            <person name="Teixeira E.C."/>
            <person name="Tezza R.I.D."/>
            <person name="Trindade dos Santos M."/>
            <person name="Truffi D."/>
            <person name="Tsai S.M."/>
            <person name="White F.F."/>
            <person name="Setubal J.C."/>
            <person name="Kitajima J.P."/>
        </authorList>
    </citation>
    <scope>NUCLEOTIDE SEQUENCE [LARGE SCALE GENOMIC DNA]</scope>
    <source>
        <strain>ATCC 33913 / DSM 3586 / NCPPB 528 / LMG 568 / P 25</strain>
    </source>
</reference>
<proteinExistence type="inferred from homology"/>
<protein>
    <recommendedName>
        <fullName>Ribosomal RNA small subunit methyltransferase B</fullName>
        <ecNumber>2.1.1.176</ecNumber>
    </recommendedName>
    <alternativeName>
        <fullName>16S rRNA m5C967 methyltransferase</fullName>
    </alternativeName>
    <alternativeName>
        <fullName>rRNA (cytosine-C(5)-)-methyltransferase RsmB</fullName>
    </alternativeName>
</protein>
<evidence type="ECO:0000250" key="1"/>
<evidence type="ECO:0000255" key="2">
    <source>
        <dbReference type="PROSITE-ProRule" id="PRU01023"/>
    </source>
</evidence>
<evidence type="ECO:0000305" key="3"/>
<name>RSMB_XANCP</name>
<comment type="function">
    <text evidence="1">Specifically methylates the cytosine at position 967 (m5C967) of 16S rRNA.</text>
</comment>
<comment type="catalytic activity">
    <reaction>
        <text>cytidine(967) in 16S rRNA + S-adenosyl-L-methionine = 5-methylcytidine(967) in 16S rRNA + S-adenosyl-L-homocysteine + H(+)</text>
        <dbReference type="Rhea" id="RHEA:42748"/>
        <dbReference type="Rhea" id="RHEA-COMP:10219"/>
        <dbReference type="Rhea" id="RHEA-COMP:10220"/>
        <dbReference type="ChEBI" id="CHEBI:15378"/>
        <dbReference type="ChEBI" id="CHEBI:57856"/>
        <dbReference type="ChEBI" id="CHEBI:59789"/>
        <dbReference type="ChEBI" id="CHEBI:74483"/>
        <dbReference type="ChEBI" id="CHEBI:82748"/>
        <dbReference type="EC" id="2.1.1.176"/>
    </reaction>
</comment>
<comment type="subcellular location">
    <subcellularLocation>
        <location evidence="3">Cytoplasm</location>
    </subcellularLocation>
</comment>
<comment type="similarity">
    <text evidence="2">Belongs to the class I-like SAM-binding methyltransferase superfamily. RsmB/NOP family.</text>
</comment>
<gene>
    <name type="primary">rsmB</name>
    <name type="synonym">rrmB</name>
    <name type="synonym">sun</name>
    <name type="ordered locus">XCC3747</name>
</gene>
<accession>Q8P4G1</accession>
<feature type="chain" id="PRO_0000211811" description="Ribosomal RNA small subunit methyltransferase B">
    <location>
        <begin position="1"/>
        <end position="437"/>
    </location>
</feature>
<feature type="active site" description="Nucleophile" evidence="2">
    <location>
        <position position="378"/>
    </location>
</feature>
<feature type="binding site" evidence="2">
    <location>
        <begin position="255"/>
        <end position="261"/>
    </location>
    <ligand>
        <name>S-adenosyl-L-methionine</name>
        <dbReference type="ChEBI" id="CHEBI:59789"/>
    </ligand>
</feature>
<feature type="binding site" evidence="2">
    <location>
        <position position="278"/>
    </location>
    <ligand>
        <name>S-adenosyl-L-methionine</name>
        <dbReference type="ChEBI" id="CHEBI:59789"/>
    </ligand>
</feature>
<feature type="binding site" evidence="2">
    <location>
        <position position="306"/>
    </location>
    <ligand>
        <name>S-adenosyl-L-methionine</name>
        <dbReference type="ChEBI" id="CHEBI:59789"/>
    </ligand>
</feature>
<feature type="binding site" evidence="2">
    <location>
        <position position="325"/>
    </location>
    <ligand>
        <name>S-adenosyl-L-methionine</name>
        <dbReference type="ChEBI" id="CHEBI:59789"/>
    </ligand>
</feature>